<name>GATB_CHLAB</name>
<feature type="chain" id="PRO_0000241209" description="Aspartyl/glutamyl-tRNA(Asn/Gln) amidotransferase subunit B">
    <location>
        <begin position="1"/>
        <end position="487"/>
    </location>
</feature>
<protein>
    <recommendedName>
        <fullName evidence="1">Aspartyl/glutamyl-tRNA(Asn/Gln) amidotransferase subunit B</fullName>
        <shortName evidence="1">Asp/Glu-ADT subunit B</shortName>
        <ecNumber evidence="1">6.3.5.-</ecNumber>
    </recommendedName>
</protein>
<gene>
    <name evidence="1" type="primary">gatB</name>
    <name type="ordered locus">CAB287</name>
</gene>
<evidence type="ECO:0000255" key="1">
    <source>
        <dbReference type="HAMAP-Rule" id="MF_00121"/>
    </source>
</evidence>
<sequence>MSDVYADWESVIGLEVHVELNTKSKLFSCARNRFGDEPNTNISPVCTGMPGSLPVLNKEAVRKAVLFGCAVEGEVALLSRFDRKSYFYPDSPRNFQITQFEHPIVRGGHIKAIVHGEERHFELAQAHIEDDAGMLKHFGEFAGVDYNRAGVPLIEIVSKPCMFCADDAVAYATALVSLLDYIGISDCNMEEGSVRFDVNISVRPKGSEELRNKVEIKNMNSFAFMAQALEAERCRQIDAYLDNPNADPKTVIPGATYRWDPEKKKTVLMRLKERAEDYKYFIEPDLPVLQLTEAYIDEIRHTLPELPFNKYQRYLHEYALAEDIAAILISDKHSAHFFELAAQECKNYRALSNWLTVEFAGRCKLKGKNLAFSGILPSSVAQLVNFIDQGVITGKIAKDIADMMMESPEKSPETILKENPEMLPMTDESALVAIISEVITANPQSVVDYKSGKTKALGFLVGQIMKRTQGKAPPNRVNELLLVELSK</sequence>
<reference key="1">
    <citation type="journal article" date="2005" name="Genome Res.">
        <title>The Chlamydophila abortus genome sequence reveals an array of variable proteins that contribute to interspecies variation.</title>
        <authorList>
            <person name="Thomson N.R."/>
            <person name="Yeats C."/>
            <person name="Bell K."/>
            <person name="Holden M.T.G."/>
            <person name="Bentley S.D."/>
            <person name="Livingstone M."/>
            <person name="Cerdeno-Tarraga A.-M."/>
            <person name="Harris B."/>
            <person name="Doggett J."/>
            <person name="Ormond D."/>
            <person name="Mungall K."/>
            <person name="Clarke K."/>
            <person name="Feltwell T."/>
            <person name="Hance Z."/>
            <person name="Sanders M."/>
            <person name="Quail M.A."/>
            <person name="Price C."/>
            <person name="Barrell B.G."/>
            <person name="Parkhill J."/>
            <person name="Longbottom D."/>
        </authorList>
    </citation>
    <scope>NUCLEOTIDE SEQUENCE [LARGE SCALE GENOMIC DNA]</scope>
    <source>
        <strain>DSM 27085 / S26/3</strain>
    </source>
</reference>
<accession>Q5L6I8</accession>
<keyword id="KW-0067">ATP-binding</keyword>
<keyword id="KW-0436">Ligase</keyword>
<keyword id="KW-0547">Nucleotide-binding</keyword>
<keyword id="KW-0648">Protein biosynthesis</keyword>
<proteinExistence type="inferred from homology"/>
<comment type="function">
    <text evidence="1">Allows the formation of correctly charged Asn-tRNA(Asn) or Gln-tRNA(Gln) through the transamidation of misacylated Asp-tRNA(Asn) or Glu-tRNA(Gln) in organisms which lack either or both of asparaginyl-tRNA or glutaminyl-tRNA synthetases. The reaction takes place in the presence of glutamine and ATP through an activated phospho-Asp-tRNA(Asn) or phospho-Glu-tRNA(Gln).</text>
</comment>
<comment type="catalytic activity">
    <reaction evidence="1">
        <text>L-glutamyl-tRNA(Gln) + L-glutamine + ATP + H2O = L-glutaminyl-tRNA(Gln) + L-glutamate + ADP + phosphate + H(+)</text>
        <dbReference type="Rhea" id="RHEA:17521"/>
        <dbReference type="Rhea" id="RHEA-COMP:9681"/>
        <dbReference type="Rhea" id="RHEA-COMP:9684"/>
        <dbReference type="ChEBI" id="CHEBI:15377"/>
        <dbReference type="ChEBI" id="CHEBI:15378"/>
        <dbReference type="ChEBI" id="CHEBI:29985"/>
        <dbReference type="ChEBI" id="CHEBI:30616"/>
        <dbReference type="ChEBI" id="CHEBI:43474"/>
        <dbReference type="ChEBI" id="CHEBI:58359"/>
        <dbReference type="ChEBI" id="CHEBI:78520"/>
        <dbReference type="ChEBI" id="CHEBI:78521"/>
        <dbReference type="ChEBI" id="CHEBI:456216"/>
    </reaction>
</comment>
<comment type="catalytic activity">
    <reaction evidence="1">
        <text>L-aspartyl-tRNA(Asn) + L-glutamine + ATP + H2O = L-asparaginyl-tRNA(Asn) + L-glutamate + ADP + phosphate + 2 H(+)</text>
        <dbReference type="Rhea" id="RHEA:14513"/>
        <dbReference type="Rhea" id="RHEA-COMP:9674"/>
        <dbReference type="Rhea" id="RHEA-COMP:9677"/>
        <dbReference type="ChEBI" id="CHEBI:15377"/>
        <dbReference type="ChEBI" id="CHEBI:15378"/>
        <dbReference type="ChEBI" id="CHEBI:29985"/>
        <dbReference type="ChEBI" id="CHEBI:30616"/>
        <dbReference type="ChEBI" id="CHEBI:43474"/>
        <dbReference type="ChEBI" id="CHEBI:58359"/>
        <dbReference type="ChEBI" id="CHEBI:78515"/>
        <dbReference type="ChEBI" id="CHEBI:78516"/>
        <dbReference type="ChEBI" id="CHEBI:456216"/>
    </reaction>
</comment>
<comment type="subunit">
    <text evidence="1">Heterotrimer of A, B and C subunits.</text>
</comment>
<comment type="similarity">
    <text evidence="1">Belongs to the GatB/GatE family. GatB subfamily.</text>
</comment>
<dbReference type="EC" id="6.3.5.-" evidence="1"/>
<dbReference type="EMBL" id="CR848038">
    <property type="protein sequence ID" value="CAH63737.1"/>
    <property type="molecule type" value="Genomic_DNA"/>
</dbReference>
<dbReference type="RefSeq" id="WP_011096958.1">
    <property type="nucleotide sequence ID" value="NC_004552.2"/>
</dbReference>
<dbReference type="SMR" id="Q5L6I8"/>
<dbReference type="GeneID" id="93024840"/>
<dbReference type="KEGG" id="cab:CAB287"/>
<dbReference type="eggNOG" id="COG0064">
    <property type="taxonomic scope" value="Bacteria"/>
</dbReference>
<dbReference type="HOGENOM" id="CLU_019240_0_0_0"/>
<dbReference type="OrthoDB" id="9804078at2"/>
<dbReference type="Proteomes" id="UP000001012">
    <property type="component" value="Chromosome"/>
</dbReference>
<dbReference type="GO" id="GO:0050566">
    <property type="term" value="F:asparaginyl-tRNA synthase (glutamine-hydrolyzing) activity"/>
    <property type="evidence" value="ECO:0007669"/>
    <property type="project" value="RHEA"/>
</dbReference>
<dbReference type="GO" id="GO:0005524">
    <property type="term" value="F:ATP binding"/>
    <property type="evidence" value="ECO:0007669"/>
    <property type="project" value="UniProtKB-KW"/>
</dbReference>
<dbReference type="GO" id="GO:0050567">
    <property type="term" value="F:glutaminyl-tRNA synthase (glutamine-hydrolyzing) activity"/>
    <property type="evidence" value="ECO:0007669"/>
    <property type="project" value="UniProtKB-UniRule"/>
</dbReference>
<dbReference type="GO" id="GO:0070681">
    <property type="term" value="P:glutaminyl-tRNAGln biosynthesis via transamidation"/>
    <property type="evidence" value="ECO:0007669"/>
    <property type="project" value="TreeGrafter"/>
</dbReference>
<dbReference type="GO" id="GO:0006412">
    <property type="term" value="P:translation"/>
    <property type="evidence" value="ECO:0007669"/>
    <property type="project" value="UniProtKB-UniRule"/>
</dbReference>
<dbReference type="FunFam" id="1.10.10.410:FF:000001">
    <property type="entry name" value="Aspartyl/glutamyl-tRNA(Asn/Gln) amidotransferase subunit B"/>
    <property type="match status" value="1"/>
</dbReference>
<dbReference type="Gene3D" id="1.10.10.410">
    <property type="match status" value="1"/>
</dbReference>
<dbReference type="Gene3D" id="1.10.150.380">
    <property type="entry name" value="GatB domain, N-terminal subdomain"/>
    <property type="match status" value="1"/>
</dbReference>
<dbReference type="HAMAP" id="MF_00121">
    <property type="entry name" value="GatB"/>
    <property type="match status" value="1"/>
</dbReference>
<dbReference type="InterPro" id="IPR017959">
    <property type="entry name" value="Asn/Gln-tRNA_amidoTrfase_suB/E"/>
</dbReference>
<dbReference type="InterPro" id="IPR006075">
    <property type="entry name" value="Asn/Gln-tRNA_Trfase_suB/E_cat"/>
</dbReference>
<dbReference type="InterPro" id="IPR018027">
    <property type="entry name" value="Asn/Gln_amidotransferase"/>
</dbReference>
<dbReference type="InterPro" id="IPR003789">
    <property type="entry name" value="Asn/Gln_tRNA_amidoTrase-B-like"/>
</dbReference>
<dbReference type="InterPro" id="IPR004413">
    <property type="entry name" value="GatB"/>
</dbReference>
<dbReference type="InterPro" id="IPR042114">
    <property type="entry name" value="GatB_C_1"/>
</dbReference>
<dbReference type="InterPro" id="IPR023168">
    <property type="entry name" value="GatB_Yqey_C_2"/>
</dbReference>
<dbReference type="InterPro" id="IPR017958">
    <property type="entry name" value="Gln-tRNA_amidoTrfase_suB_CS"/>
</dbReference>
<dbReference type="InterPro" id="IPR014746">
    <property type="entry name" value="Gln_synth/guanido_kin_cat_dom"/>
</dbReference>
<dbReference type="NCBIfam" id="TIGR00133">
    <property type="entry name" value="gatB"/>
    <property type="match status" value="1"/>
</dbReference>
<dbReference type="NCBIfam" id="NF004012">
    <property type="entry name" value="PRK05477.1-2"/>
    <property type="match status" value="1"/>
</dbReference>
<dbReference type="NCBIfam" id="NF004014">
    <property type="entry name" value="PRK05477.1-4"/>
    <property type="match status" value="1"/>
</dbReference>
<dbReference type="PANTHER" id="PTHR11659">
    <property type="entry name" value="GLUTAMYL-TRNA GLN AMIDOTRANSFERASE SUBUNIT B MITOCHONDRIAL AND PROKARYOTIC PET112-RELATED"/>
    <property type="match status" value="1"/>
</dbReference>
<dbReference type="PANTHER" id="PTHR11659:SF0">
    <property type="entry name" value="GLUTAMYL-TRNA(GLN) AMIDOTRANSFERASE SUBUNIT B, MITOCHONDRIAL"/>
    <property type="match status" value="1"/>
</dbReference>
<dbReference type="Pfam" id="PF02934">
    <property type="entry name" value="GatB_N"/>
    <property type="match status" value="1"/>
</dbReference>
<dbReference type="Pfam" id="PF02637">
    <property type="entry name" value="GatB_Yqey"/>
    <property type="match status" value="1"/>
</dbReference>
<dbReference type="SMART" id="SM00845">
    <property type="entry name" value="GatB_Yqey"/>
    <property type="match status" value="1"/>
</dbReference>
<dbReference type="SUPFAM" id="SSF89095">
    <property type="entry name" value="GatB/YqeY motif"/>
    <property type="match status" value="1"/>
</dbReference>
<dbReference type="SUPFAM" id="SSF55931">
    <property type="entry name" value="Glutamine synthetase/guanido kinase"/>
    <property type="match status" value="1"/>
</dbReference>
<dbReference type="PROSITE" id="PS01234">
    <property type="entry name" value="GATB"/>
    <property type="match status" value="1"/>
</dbReference>
<organism>
    <name type="scientific">Chlamydia abortus (strain DSM 27085 / S26/3)</name>
    <name type="common">Chlamydophila abortus</name>
    <dbReference type="NCBI Taxonomy" id="218497"/>
    <lineage>
        <taxon>Bacteria</taxon>
        <taxon>Pseudomonadati</taxon>
        <taxon>Chlamydiota</taxon>
        <taxon>Chlamydiia</taxon>
        <taxon>Chlamydiales</taxon>
        <taxon>Chlamydiaceae</taxon>
        <taxon>Chlamydia/Chlamydophila group</taxon>
        <taxon>Chlamydia</taxon>
    </lineage>
</organism>